<comment type="function">
    <text evidence="1">NAD-binding protein involved in the addition of a carboxymethylaminomethyl (cmnm) group at the wobble position (U34) of certain tRNAs, forming tRNA-cmnm(5)s(2)U34.</text>
</comment>
<comment type="cofactor">
    <cofactor evidence="1">
        <name>FAD</name>
        <dbReference type="ChEBI" id="CHEBI:57692"/>
    </cofactor>
</comment>
<comment type="subunit">
    <text evidence="1">Homodimer. Heterotetramer of two MnmE and two MnmG subunits.</text>
</comment>
<comment type="subcellular location">
    <subcellularLocation>
        <location evidence="1">Cytoplasm</location>
    </subcellularLocation>
</comment>
<comment type="similarity">
    <text evidence="1">Belongs to the MnmG family.</text>
</comment>
<organism>
    <name type="scientific">Bacillus licheniformis (strain ATCC 14580 / DSM 13 / JCM 2505 / CCUG 7422 / NBRC 12200 / NCIMB 9375 / NCTC 10341 / NRRL NRS-1264 / Gibson 46)</name>
    <dbReference type="NCBI Taxonomy" id="279010"/>
    <lineage>
        <taxon>Bacteria</taxon>
        <taxon>Bacillati</taxon>
        <taxon>Bacillota</taxon>
        <taxon>Bacilli</taxon>
        <taxon>Bacillales</taxon>
        <taxon>Bacillaceae</taxon>
        <taxon>Bacillus</taxon>
    </lineage>
</organism>
<gene>
    <name evidence="1" type="primary">mnmG</name>
    <name evidence="1" type="synonym">gidA</name>
    <name type="ordered locus">BLi04374</name>
    <name type="ordered locus">BL00109</name>
</gene>
<proteinExistence type="inferred from homology"/>
<dbReference type="EMBL" id="AE017333">
    <property type="protein sequence ID" value="AAU43182.1"/>
    <property type="molecule type" value="Genomic_DNA"/>
</dbReference>
<dbReference type="EMBL" id="CP000002">
    <property type="protein sequence ID" value="AAU25800.1"/>
    <property type="molecule type" value="Genomic_DNA"/>
</dbReference>
<dbReference type="RefSeq" id="WP_003178046.1">
    <property type="nucleotide sequence ID" value="NC_006322.1"/>
</dbReference>
<dbReference type="SMR" id="Q65CN2"/>
<dbReference type="STRING" id="279010.BL00109"/>
<dbReference type="GeneID" id="92859056"/>
<dbReference type="KEGG" id="bld:BLi04374"/>
<dbReference type="KEGG" id="bli:BL00109"/>
<dbReference type="eggNOG" id="COG0445">
    <property type="taxonomic scope" value="Bacteria"/>
</dbReference>
<dbReference type="HOGENOM" id="CLU_007831_2_2_9"/>
<dbReference type="Proteomes" id="UP000000606">
    <property type="component" value="Chromosome"/>
</dbReference>
<dbReference type="GO" id="GO:0005829">
    <property type="term" value="C:cytosol"/>
    <property type="evidence" value="ECO:0007669"/>
    <property type="project" value="TreeGrafter"/>
</dbReference>
<dbReference type="GO" id="GO:0050660">
    <property type="term" value="F:flavin adenine dinucleotide binding"/>
    <property type="evidence" value="ECO:0007669"/>
    <property type="project" value="UniProtKB-UniRule"/>
</dbReference>
<dbReference type="GO" id="GO:0030488">
    <property type="term" value="P:tRNA methylation"/>
    <property type="evidence" value="ECO:0007669"/>
    <property type="project" value="TreeGrafter"/>
</dbReference>
<dbReference type="GO" id="GO:0002098">
    <property type="term" value="P:tRNA wobble uridine modification"/>
    <property type="evidence" value="ECO:0007669"/>
    <property type="project" value="InterPro"/>
</dbReference>
<dbReference type="FunFam" id="1.10.10.1800:FF:000001">
    <property type="entry name" value="tRNA uridine 5-carboxymethylaminomethyl modification enzyme MnmG"/>
    <property type="match status" value="1"/>
</dbReference>
<dbReference type="FunFam" id="1.10.150.570:FF:000001">
    <property type="entry name" value="tRNA uridine 5-carboxymethylaminomethyl modification enzyme MnmG"/>
    <property type="match status" value="1"/>
</dbReference>
<dbReference type="FunFam" id="3.50.50.60:FF:000002">
    <property type="entry name" value="tRNA uridine 5-carboxymethylaminomethyl modification enzyme MnmG"/>
    <property type="match status" value="1"/>
</dbReference>
<dbReference type="FunFam" id="3.50.50.60:FF:000063">
    <property type="entry name" value="tRNA uridine 5-carboxymethylaminomethyl modification enzyme MnmG"/>
    <property type="match status" value="1"/>
</dbReference>
<dbReference type="Gene3D" id="3.50.50.60">
    <property type="entry name" value="FAD/NAD(P)-binding domain"/>
    <property type="match status" value="2"/>
</dbReference>
<dbReference type="Gene3D" id="1.10.150.570">
    <property type="entry name" value="GidA associated domain, C-terminal subdomain"/>
    <property type="match status" value="1"/>
</dbReference>
<dbReference type="Gene3D" id="1.10.10.1800">
    <property type="entry name" value="tRNA uridine 5-carboxymethylaminomethyl modification enzyme MnmG/GidA"/>
    <property type="match status" value="1"/>
</dbReference>
<dbReference type="HAMAP" id="MF_00129">
    <property type="entry name" value="MnmG_GidA"/>
    <property type="match status" value="1"/>
</dbReference>
<dbReference type="InterPro" id="IPR036188">
    <property type="entry name" value="FAD/NAD-bd_sf"/>
</dbReference>
<dbReference type="InterPro" id="IPR049312">
    <property type="entry name" value="GIDA_C_N"/>
</dbReference>
<dbReference type="InterPro" id="IPR004416">
    <property type="entry name" value="MnmG"/>
</dbReference>
<dbReference type="InterPro" id="IPR002218">
    <property type="entry name" value="MnmG-rel"/>
</dbReference>
<dbReference type="InterPro" id="IPR020595">
    <property type="entry name" value="MnmG-rel_CS"/>
</dbReference>
<dbReference type="InterPro" id="IPR026904">
    <property type="entry name" value="MnmG_C"/>
</dbReference>
<dbReference type="InterPro" id="IPR047001">
    <property type="entry name" value="MnmG_C_subdom"/>
</dbReference>
<dbReference type="InterPro" id="IPR044920">
    <property type="entry name" value="MnmG_C_subdom_sf"/>
</dbReference>
<dbReference type="InterPro" id="IPR040131">
    <property type="entry name" value="MnmG_N"/>
</dbReference>
<dbReference type="NCBIfam" id="TIGR00136">
    <property type="entry name" value="mnmG_gidA"/>
    <property type="match status" value="1"/>
</dbReference>
<dbReference type="PANTHER" id="PTHR11806">
    <property type="entry name" value="GLUCOSE INHIBITED DIVISION PROTEIN A"/>
    <property type="match status" value="1"/>
</dbReference>
<dbReference type="PANTHER" id="PTHR11806:SF0">
    <property type="entry name" value="PROTEIN MTO1 HOMOLOG, MITOCHONDRIAL"/>
    <property type="match status" value="1"/>
</dbReference>
<dbReference type="Pfam" id="PF01134">
    <property type="entry name" value="GIDA"/>
    <property type="match status" value="1"/>
</dbReference>
<dbReference type="Pfam" id="PF21680">
    <property type="entry name" value="GIDA_C_1st"/>
    <property type="match status" value="1"/>
</dbReference>
<dbReference type="Pfam" id="PF13932">
    <property type="entry name" value="SAM_GIDA_C"/>
    <property type="match status" value="1"/>
</dbReference>
<dbReference type="PRINTS" id="PR00411">
    <property type="entry name" value="PNDRDTASEI"/>
</dbReference>
<dbReference type="SMART" id="SM01228">
    <property type="entry name" value="GIDA_assoc_3"/>
    <property type="match status" value="1"/>
</dbReference>
<dbReference type="SUPFAM" id="SSF51905">
    <property type="entry name" value="FAD/NAD(P)-binding domain"/>
    <property type="match status" value="1"/>
</dbReference>
<dbReference type="PROSITE" id="PS01280">
    <property type="entry name" value="GIDA_1"/>
    <property type="match status" value="1"/>
</dbReference>
<dbReference type="PROSITE" id="PS01281">
    <property type="entry name" value="GIDA_2"/>
    <property type="match status" value="1"/>
</dbReference>
<reference key="1">
    <citation type="journal article" date="2004" name="J. Mol. Microbiol. Biotechnol.">
        <title>The complete genome sequence of Bacillus licheniformis DSM13, an organism with great industrial potential.</title>
        <authorList>
            <person name="Veith B."/>
            <person name="Herzberg C."/>
            <person name="Steckel S."/>
            <person name="Feesche J."/>
            <person name="Maurer K.H."/>
            <person name="Ehrenreich P."/>
            <person name="Baeumer S."/>
            <person name="Henne A."/>
            <person name="Liesegang H."/>
            <person name="Merkl R."/>
            <person name="Ehrenreich A."/>
            <person name="Gottschalk G."/>
        </authorList>
    </citation>
    <scope>NUCLEOTIDE SEQUENCE [LARGE SCALE GENOMIC DNA]</scope>
    <source>
        <strain>ATCC 14580 / DSM 13 / JCM 2505 / CCUG 7422 / NBRC 12200 / NCIMB 9375 / NCTC 10341 / NRRL NRS-1264 / Gibson 46</strain>
    </source>
</reference>
<reference key="2">
    <citation type="journal article" date="2004" name="Genome Biol.">
        <title>Complete genome sequence of the industrial bacterium Bacillus licheniformis and comparisons with closely related Bacillus species.</title>
        <authorList>
            <person name="Rey M.W."/>
            <person name="Ramaiya P."/>
            <person name="Nelson B.A."/>
            <person name="Brody-Karpin S.D."/>
            <person name="Zaretsky E.J."/>
            <person name="Tang M."/>
            <person name="Lopez de Leon A."/>
            <person name="Xiang H."/>
            <person name="Gusti V."/>
            <person name="Clausen I.G."/>
            <person name="Olsen P.B."/>
            <person name="Rasmussen M.D."/>
            <person name="Andersen J.T."/>
            <person name="Joergensen P.L."/>
            <person name="Larsen T.S."/>
            <person name="Sorokin A."/>
            <person name="Bolotin A."/>
            <person name="Lapidus A."/>
            <person name="Galleron N."/>
            <person name="Ehrlich S.D."/>
            <person name="Berka R.M."/>
        </authorList>
    </citation>
    <scope>NUCLEOTIDE SEQUENCE [LARGE SCALE GENOMIC DNA]</scope>
    <source>
        <strain>ATCC 14580 / DSM 13 / JCM 2505 / CCUG 7422 / NBRC 12200 / NCIMB 9375 / NCTC 10341 / NRRL NRS-1264 / Gibson 46</strain>
    </source>
</reference>
<keyword id="KW-0963">Cytoplasm</keyword>
<keyword id="KW-0274">FAD</keyword>
<keyword id="KW-0285">Flavoprotein</keyword>
<keyword id="KW-0520">NAD</keyword>
<keyword id="KW-1185">Reference proteome</keyword>
<keyword id="KW-0819">tRNA processing</keyword>
<feature type="chain" id="PRO_0000117053" description="tRNA uridine 5-carboxymethylaminomethyl modification enzyme MnmG">
    <location>
        <begin position="1"/>
        <end position="628"/>
    </location>
</feature>
<feature type="binding site" evidence="1">
    <location>
        <begin position="14"/>
        <end position="19"/>
    </location>
    <ligand>
        <name>FAD</name>
        <dbReference type="ChEBI" id="CHEBI:57692"/>
    </ligand>
</feature>
<feature type="binding site" evidence="1">
    <location>
        <position position="126"/>
    </location>
    <ligand>
        <name>FAD</name>
        <dbReference type="ChEBI" id="CHEBI:57692"/>
    </ligand>
</feature>
<feature type="binding site" evidence="1">
    <location>
        <position position="181"/>
    </location>
    <ligand>
        <name>FAD</name>
        <dbReference type="ChEBI" id="CHEBI:57692"/>
    </ligand>
</feature>
<feature type="binding site" evidence="1">
    <location>
        <begin position="273"/>
        <end position="287"/>
    </location>
    <ligand>
        <name>NAD(+)</name>
        <dbReference type="ChEBI" id="CHEBI:57540"/>
    </ligand>
</feature>
<feature type="binding site" evidence="1">
    <location>
        <position position="370"/>
    </location>
    <ligand>
        <name>FAD</name>
        <dbReference type="ChEBI" id="CHEBI:57692"/>
    </ligand>
</feature>
<evidence type="ECO:0000255" key="1">
    <source>
        <dbReference type="HAMAP-Rule" id="MF_00129"/>
    </source>
</evidence>
<sequence>MGYEAGQYDVVVVGAGHAGVEAALASARQGAKTLVLTINLDMVAFMPCNPSVGGPAKGIVVREIDALGGEMAKNIDKTHIQMRLLNTGKGPAVRALRAQADKFQYQHEMKKTLENEPNLTMLQGMVERLLIEDGECRGVITQTGAEYRSKTVVLTTGTFLRGKIILGDLSYSSGPNNQQPSIKLSEHLEELGFDLVRFKTGTPPRVNSHSIDYSKTEIQPGDEVPRAFSYETVEYITDQLPCWLTYTSPETHEIIDNNLHRSPMYSGMIKGTGPRYCPSIEDKVVRFNDKPRHQIFLEPEGRNTQEVYVQGLSTSLPEDVQRKMLSTIPGLENVQMMRAGYAIEYDAIVPTQLWPTLETKKIPGLFTAGQINGTSGYEEAAGQGIMAGINAGRKALGKEEVILSRSDAYIGVLIDDLVTKGTNEPYRLLTSRAEYRLLLRHDNADLRLTEIGYQIGLISEERYQKFQEKKAAIEAEKKRLHSVIIKPTKENQEYIRSLGGSELKDGIRATDLMKRPEMNYETVTALAPPEQKVAGDVAEQVEIQIKYEGYIEKSLQQVEKLKKMENKKIPDRIDYDAIKGIATEARQKLKEVRPLSVAQASRISGVNPADISILLVYLEQGRIAKVAE</sequence>
<name>MNMG_BACLD</name>
<protein>
    <recommendedName>
        <fullName evidence="1">tRNA uridine 5-carboxymethylaminomethyl modification enzyme MnmG</fullName>
    </recommendedName>
    <alternativeName>
        <fullName evidence="1">Glucose-inhibited division protein A</fullName>
    </alternativeName>
</protein>
<accession>Q65CN2</accession>
<accession>Q62N61</accession>